<evidence type="ECO:0000250" key="1">
    <source>
        <dbReference type="UniProtKB" id="P46663"/>
    </source>
</evidence>
<evidence type="ECO:0000255" key="2"/>
<evidence type="ECO:0000255" key="3">
    <source>
        <dbReference type="PROSITE-ProRule" id="PRU00521"/>
    </source>
</evidence>
<sequence>MASQTLVVFQASNQSQLPPPNATLCDGAQEAWHLLHKVLPTCVVAICSGGLLGNLFVLSVFLVPRRRLNAAEIYLAHLAASDLVFALGLPFWAETIRNGFHWPFGAPLCRVVNGVIKANLFISIFLVVAISRDRYRALVHPVASWRRRRRRHWAQATCVLIWTAGGLLSIPTFLLRSVQVVPELNVSACVLPFPHEAWAFVRTVELNVLGFLLPLAAILFFNYHILAALRGREQLSRTRCGGPRDGKTTALILTLVAVFLLCWTPYHVCAFLEFLLHVRAIRGCFWEDFTDLGLQYTNFFAFINSCLNPVIYVFWGQLFRTKIWELYHRCLPRKLTAVSSSRRKEIFQIFWRN</sequence>
<reference key="1">
    <citation type="submission" date="2002-08" db="EMBL/GenBank/DDBJ databases">
        <title>Orthologs of human receptors and methods of use.</title>
        <authorList>
            <person name="Horlick R.A."/>
            <person name="Zhao J."/>
            <person name="Swanson R.N."/>
            <person name="Webb M.L."/>
            <person name="Strohl B."/>
            <person name="Baldwin J.J."/>
            <person name="Auld D.S."/>
        </authorList>
    </citation>
    <scope>NUCLEOTIDE SEQUENCE [GENOMIC DNA]</scope>
</reference>
<proteinExistence type="inferred from homology"/>
<name>BKRB1_PIG</name>
<accession>Q8HZN9</accession>
<organism>
    <name type="scientific">Sus scrofa</name>
    <name type="common">Pig</name>
    <dbReference type="NCBI Taxonomy" id="9823"/>
    <lineage>
        <taxon>Eukaryota</taxon>
        <taxon>Metazoa</taxon>
        <taxon>Chordata</taxon>
        <taxon>Craniata</taxon>
        <taxon>Vertebrata</taxon>
        <taxon>Euteleostomi</taxon>
        <taxon>Mammalia</taxon>
        <taxon>Eutheria</taxon>
        <taxon>Laurasiatheria</taxon>
        <taxon>Artiodactyla</taxon>
        <taxon>Suina</taxon>
        <taxon>Suidae</taxon>
        <taxon>Sus</taxon>
    </lineage>
</organism>
<protein>
    <recommendedName>
        <fullName>B1 bradykinin receptor</fullName>
        <shortName>B1R</shortName>
        <shortName>BK-1 receptor</shortName>
    </recommendedName>
</protein>
<feature type="chain" id="PRO_0000069185" description="B1 bradykinin receptor">
    <location>
        <begin position="1"/>
        <end position="353"/>
    </location>
</feature>
<feature type="topological domain" description="Extracellular" evidence="2">
    <location>
        <begin position="1"/>
        <end position="41"/>
    </location>
</feature>
<feature type="transmembrane region" description="Helical; Name=1" evidence="2">
    <location>
        <begin position="42"/>
        <end position="62"/>
    </location>
</feature>
<feature type="topological domain" description="Cytoplasmic" evidence="2">
    <location>
        <begin position="63"/>
        <end position="72"/>
    </location>
</feature>
<feature type="transmembrane region" description="Helical; Name=2" evidence="2">
    <location>
        <begin position="73"/>
        <end position="93"/>
    </location>
</feature>
<feature type="topological domain" description="Extracellular" evidence="2">
    <location>
        <begin position="94"/>
        <end position="110"/>
    </location>
</feature>
<feature type="transmembrane region" description="Helical; Name=3" evidence="2">
    <location>
        <begin position="111"/>
        <end position="131"/>
    </location>
</feature>
<feature type="topological domain" description="Cytoplasmic" evidence="2">
    <location>
        <begin position="132"/>
        <end position="154"/>
    </location>
</feature>
<feature type="transmembrane region" description="Helical; Name=4" evidence="2">
    <location>
        <begin position="155"/>
        <end position="175"/>
    </location>
</feature>
<feature type="topological domain" description="Extracellular" evidence="2">
    <location>
        <begin position="176"/>
        <end position="207"/>
    </location>
</feature>
<feature type="transmembrane region" description="Helical; Name=5" evidence="2">
    <location>
        <begin position="208"/>
        <end position="228"/>
    </location>
</feature>
<feature type="topological domain" description="Cytoplasmic" evidence="2">
    <location>
        <begin position="229"/>
        <end position="251"/>
    </location>
</feature>
<feature type="transmembrane region" description="Helical; Name=6" evidence="2">
    <location>
        <begin position="252"/>
        <end position="272"/>
    </location>
</feature>
<feature type="topological domain" description="Extracellular" evidence="2">
    <location>
        <begin position="273"/>
        <end position="295"/>
    </location>
</feature>
<feature type="transmembrane region" description="Helical; Name=7" evidence="2">
    <location>
        <begin position="296"/>
        <end position="316"/>
    </location>
</feature>
<feature type="topological domain" description="Cytoplasmic" evidence="2">
    <location>
        <begin position="317"/>
        <end position="353"/>
    </location>
</feature>
<feature type="lipid moiety-binding region" description="S-palmitoyl cysteine" evidence="2">
    <location>
        <position position="330"/>
    </location>
</feature>
<feature type="glycosylation site" description="N-linked (GlcNAc...) asparagine" evidence="2">
    <location>
        <position position="13"/>
    </location>
</feature>
<feature type="glycosylation site" description="N-linked (GlcNAc...) asparagine" evidence="2">
    <location>
        <position position="21"/>
    </location>
</feature>
<feature type="glycosylation site" description="N-linked (GlcNAc...) asparagine" evidence="2">
    <location>
        <position position="185"/>
    </location>
</feature>
<feature type="disulfide bond" evidence="3">
    <location>
        <begin position="109"/>
        <end position="189"/>
    </location>
</feature>
<gene>
    <name type="primary">BDKRB1</name>
</gene>
<keyword id="KW-1003">Cell membrane</keyword>
<keyword id="KW-1015">Disulfide bond</keyword>
<keyword id="KW-0297">G-protein coupled receptor</keyword>
<keyword id="KW-0325">Glycoprotein</keyword>
<keyword id="KW-0449">Lipoprotein</keyword>
<keyword id="KW-0472">Membrane</keyword>
<keyword id="KW-0564">Palmitate</keyword>
<keyword id="KW-0675">Receptor</keyword>
<keyword id="KW-1185">Reference proteome</keyword>
<keyword id="KW-0807">Transducer</keyword>
<keyword id="KW-0812">Transmembrane</keyword>
<keyword id="KW-1133">Transmembrane helix</keyword>
<dbReference type="EMBL" id="AF540788">
    <property type="protein sequence ID" value="AAN16467.1"/>
    <property type="molecule type" value="Genomic_DNA"/>
</dbReference>
<dbReference type="RefSeq" id="NP_001106535.1">
    <property type="nucleotide sequence ID" value="NM_001113064.1"/>
</dbReference>
<dbReference type="SMR" id="Q8HZN9"/>
<dbReference type="FunCoup" id="Q8HZN9">
    <property type="interactions" value="763"/>
</dbReference>
<dbReference type="GlyCosmos" id="Q8HZN9">
    <property type="glycosylation" value="3 sites, No reported glycans"/>
</dbReference>
<dbReference type="GlyGen" id="Q8HZN9">
    <property type="glycosylation" value="3 sites"/>
</dbReference>
<dbReference type="PaxDb" id="9823-ENSSSCP00000002708"/>
<dbReference type="GeneID" id="100127469"/>
<dbReference type="KEGG" id="ssc:100127469"/>
<dbReference type="CTD" id="623"/>
<dbReference type="eggNOG" id="KOG3656">
    <property type="taxonomic scope" value="Eukaryota"/>
</dbReference>
<dbReference type="InParanoid" id="Q8HZN9"/>
<dbReference type="OrthoDB" id="6076970at2759"/>
<dbReference type="Proteomes" id="UP000008227">
    <property type="component" value="Unplaced"/>
</dbReference>
<dbReference type="Proteomes" id="UP000314985">
    <property type="component" value="Unplaced"/>
</dbReference>
<dbReference type="Proteomes" id="UP000694570">
    <property type="component" value="Unplaced"/>
</dbReference>
<dbReference type="Proteomes" id="UP000694571">
    <property type="component" value="Unplaced"/>
</dbReference>
<dbReference type="Proteomes" id="UP000694720">
    <property type="component" value="Unplaced"/>
</dbReference>
<dbReference type="Proteomes" id="UP000694722">
    <property type="component" value="Unplaced"/>
</dbReference>
<dbReference type="Proteomes" id="UP000694723">
    <property type="component" value="Unplaced"/>
</dbReference>
<dbReference type="Proteomes" id="UP000694724">
    <property type="component" value="Unplaced"/>
</dbReference>
<dbReference type="Proteomes" id="UP000694725">
    <property type="component" value="Unplaced"/>
</dbReference>
<dbReference type="Proteomes" id="UP000694726">
    <property type="component" value="Unplaced"/>
</dbReference>
<dbReference type="Proteomes" id="UP000694727">
    <property type="component" value="Unplaced"/>
</dbReference>
<dbReference type="Proteomes" id="UP000694728">
    <property type="component" value="Unplaced"/>
</dbReference>
<dbReference type="GO" id="GO:0005886">
    <property type="term" value="C:plasma membrane"/>
    <property type="evidence" value="ECO:0000318"/>
    <property type="project" value="GO_Central"/>
</dbReference>
<dbReference type="GO" id="GO:0004947">
    <property type="term" value="F:bradykinin receptor activity"/>
    <property type="evidence" value="ECO:0000318"/>
    <property type="project" value="GO_Central"/>
</dbReference>
<dbReference type="GO" id="GO:0019371">
    <property type="term" value="P:cyclooxygenase pathway"/>
    <property type="evidence" value="ECO:0000315"/>
    <property type="project" value="AgBase"/>
</dbReference>
<dbReference type="GO" id="GO:0007186">
    <property type="term" value="P:G protein-coupled receptor signaling pathway"/>
    <property type="evidence" value="ECO:0000318"/>
    <property type="project" value="GO_Central"/>
</dbReference>
<dbReference type="GO" id="GO:0006954">
    <property type="term" value="P:inflammatory response"/>
    <property type="evidence" value="ECO:0007669"/>
    <property type="project" value="InterPro"/>
</dbReference>
<dbReference type="GO" id="GO:0009612">
    <property type="term" value="P:response to mechanical stimulus"/>
    <property type="evidence" value="ECO:0007669"/>
    <property type="project" value="InterPro"/>
</dbReference>
<dbReference type="GO" id="GO:0060085">
    <property type="term" value="P:smooth muscle relaxation of the bladder outlet"/>
    <property type="evidence" value="ECO:0000315"/>
    <property type="project" value="AgBase"/>
</dbReference>
<dbReference type="FunFam" id="1.20.1070.10:FF:000295">
    <property type="entry name" value="B1 bradykinin receptor"/>
    <property type="match status" value="1"/>
</dbReference>
<dbReference type="Gene3D" id="1.20.1070.10">
    <property type="entry name" value="Rhodopsin 7-helix transmembrane proteins"/>
    <property type="match status" value="1"/>
</dbReference>
<dbReference type="InterPro" id="IPR001186">
    <property type="entry name" value="Brdyknn_1_rcpt"/>
</dbReference>
<dbReference type="InterPro" id="IPR000496">
    <property type="entry name" value="Brdyknn_rcpt"/>
</dbReference>
<dbReference type="InterPro" id="IPR050119">
    <property type="entry name" value="CCR1-9-like"/>
</dbReference>
<dbReference type="InterPro" id="IPR000276">
    <property type="entry name" value="GPCR_Rhodpsn"/>
</dbReference>
<dbReference type="InterPro" id="IPR017452">
    <property type="entry name" value="GPCR_Rhodpsn_7TM"/>
</dbReference>
<dbReference type="PANTHER" id="PTHR10489:SF957">
    <property type="entry name" value="B2 BRADYKININ RECEPTOR"/>
    <property type="match status" value="1"/>
</dbReference>
<dbReference type="PANTHER" id="PTHR10489">
    <property type="entry name" value="CELL ADHESION MOLECULE"/>
    <property type="match status" value="1"/>
</dbReference>
<dbReference type="Pfam" id="PF00001">
    <property type="entry name" value="7tm_1"/>
    <property type="match status" value="1"/>
</dbReference>
<dbReference type="PRINTS" id="PR00425">
    <property type="entry name" value="BRADYKININR"/>
</dbReference>
<dbReference type="PRINTS" id="PR00993">
    <property type="entry name" value="BRADYKINNB1R"/>
</dbReference>
<dbReference type="PRINTS" id="PR00237">
    <property type="entry name" value="GPCRRHODOPSN"/>
</dbReference>
<dbReference type="SUPFAM" id="SSF81321">
    <property type="entry name" value="Family A G protein-coupled receptor-like"/>
    <property type="match status" value="1"/>
</dbReference>
<dbReference type="PROSITE" id="PS50262">
    <property type="entry name" value="G_PROTEIN_RECEP_F1_2"/>
    <property type="match status" value="1"/>
</dbReference>
<comment type="function">
    <text evidence="1">This is a receptor for bradykinin. Could be a factor in chronic pain and inflammation.</text>
</comment>
<comment type="subcellular location">
    <subcellularLocation>
        <location evidence="1">Cell membrane</location>
        <topology evidence="2">Multi-pass membrane protein</topology>
    </subcellularLocation>
</comment>
<comment type="similarity">
    <text evidence="3">Belongs to the G-protein coupled receptor 1 family. Bradykinin receptor subfamily. BDKRB1 sub-subfamily.</text>
</comment>